<protein>
    <recommendedName>
        <fullName evidence="1">UPF0231 protein YacL</fullName>
    </recommendedName>
</protein>
<accession>Q5PD96</accession>
<feature type="chain" id="PRO_1000064364" description="UPF0231 protein YacL">
    <location>
        <begin position="1"/>
        <end position="120"/>
    </location>
</feature>
<reference key="1">
    <citation type="journal article" date="2004" name="Nat. Genet.">
        <title>Comparison of genome degradation in Paratyphi A and Typhi, human-restricted serovars of Salmonella enterica that cause typhoid.</title>
        <authorList>
            <person name="McClelland M."/>
            <person name="Sanderson K.E."/>
            <person name="Clifton S.W."/>
            <person name="Latreille P."/>
            <person name="Porwollik S."/>
            <person name="Sabo A."/>
            <person name="Meyer R."/>
            <person name="Bieri T."/>
            <person name="Ozersky P."/>
            <person name="McLellan M."/>
            <person name="Harkins C.R."/>
            <person name="Wang C."/>
            <person name="Nguyen C."/>
            <person name="Berghoff A."/>
            <person name="Elliott G."/>
            <person name="Kohlberg S."/>
            <person name="Strong C."/>
            <person name="Du F."/>
            <person name="Carter J."/>
            <person name="Kremizki C."/>
            <person name="Layman D."/>
            <person name="Leonard S."/>
            <person name="Sun H."/>
            <person name="Fulton L."/>
            <person name="Nash W."/>
            <person name="Miner T."/>
            <person name="Minx P."/>
            <person name="Delehaunty K."/>
            <person name="Fronick C."/>
            <person name="Magrini V."/>
            <person name="Nhan M."/>
            <person name="Warren W."/>
            <person name="Florea L."/>
            <person name="Spieth J."/>
            <person name="Wilson R.K."/>
        </authorList>
    </citation>
    <scope>NUCLEOTIDE SEQUENCE [LARGE SCALE GENOMIC DNA]</scope>
    <source>
        <strain>ATCC 9150 / SARB42</strain>
    </source>
</reference>
<comment type="similarity">
    <text evidence="1">Belongs to the UPF0231 family.</text>
</comment>
<dbReference type="EMBL" id="CP000026">
    <property type="protein sequence ID" value="AAV76196.1"/>
    <property type="molecule type" value="Genomic_DNA"/>
</dbReference>
<dbReference type="RefSeq" id="WP_000384313.1">
    <property type="nucleotide sequence ID" value="NC_006511.1"/>
</dbReference>
<dbReference type="SMR" id="Q5PD96"/>
<dbReference type="KEGG" id="spt:SPA0163"/>
<dbReference type="HOGENOM" id="CLU_139226_0_0_6"/>
<dbReference type="Proteomes" id="UP000008185">
    <property type="component" value="Chromosome"/>
</dbReference>
<dbReference type="HAMAP" id="MF_01053">
    <property type="entry name" value="UPF0231"/>
    <property type="match status" value="1"/>
</dbReference>
<dbReference type="InterPro" id="IPR008249">
    <property type="entry name" value="UPF0231"/>
</dbReference>
<dbReference type="NCBIfam" id="NF003574">
    <property type="entry name" value="PRK05248.1-1"/>
    <property type="match status" value="1"/>
</dbReference>
<dbReference type="NCBIfam" id="NF003576">
    <property type="entry name" value="PRK05248.1-3"/>
    <property type="match status" value="1"/>
</dbReference>
<dbReference type="Pfam" id="PF06062">
    <property type="entry name" value="UPF0231"/>
    <property type="match status" value="1"/>
</dbReference>
<dbReference type="PIRSF" id="PIRSF006287">
    <property type="entry name" value="UCP006287"/>
    <property type="match status" value="1"/>
</dbReference>
<evidence type="ECO:0000255" key="1">
    <source>
        <dbReference type="HAMAP-Rule" id="MF_01053"/>
    </source>
</evidence>
<proteinExistence type="inferred from homology"/>
<name>YACL_SALPA</name>
<sequence>MDYEFLRDVTGRVLVRMSMGHEVVGHWFNEEVKDNLSLLDEVEQAARTVKGSERSWQRAGHEYTIWIDGEEVMIRANQLDFSGDEMEEGMSYYDEESLSLCGMEDFLRVVAAYREFVSKA</sequence>
<gene>
    <name evidence="1" type="primary">yacL</name>
    <name type="ordered locus">SPA0163</name>
</gene>
<organism>
    <name type="scientific">Salmonella paratyphi A (strain ATCC 9150 / SARB42)</name>
    <dbReference type="NCBI Taxonomy" id="295319"/>
    <lineage>
        <taxon>Bacteria</taxon>
        <taxon>Pseudomonadati</taxon>
        <taxon>Pseudomonadota</taxon>
        <taxon>Gammaproteobacteria</taxon>
        <taxon>Enterobacterales</taxon>
        <taxon>Enterobacteriaceae</taxon>
        <taxon>Salmonella</taxon>
    </lineage>
</organism>